<evidence type="ECO:0000255" key="1">
    <source>
        <dbReference type="HAMAP-Rule" id="MF_01456"/>
    </source>
</evidence>
<keyword id="KW-0997">Cell inner membrane</keyword>
<keyword id="KW-1003">Cell membrane</keyword>
<keyword id="KW-0472">Membrane</keyword>
<keyword id="KW-0520">NAD</keyword>
<keyword id="KW-0874">Quinone</keyword>
<keyword id="KW-1278">Translocase</keyword>
<keyword id="KW-0812">Transmembrane</keyword>
<keyword id="KW-1133">Transmembrane helix</keyword>
<keyword id="KW-0813">Transport</keyword>
<keyword id="KW-0830">Ubiquinone</keyword>
<accession>B8J1D0</accession>
<reference key="1">
    <citation type="submission" date="2009-01" db="EMBL/GenBank/DDBJ databases">
        <title>Complete sequence of Desulfovibrio desulfuricans subsp. desulfuricans str. ATCC 27774.</title>
        <authorList>
            <consortium name="US DOE Joint Genome Institute"/>
            <person name="Lucas S."/>
            <person name="Copeland A."/>
            <person name="Lapidus A."/>
            <person name="Glavina del Rio T."/>
            <person name="Tice H."/>
            <person name="Bruce D."/>
            <person name="Goodwin L."/>
            <person name="Pitluck S."/>
            <person name="Sims D."/>
            <person name="Lu M."/>
            <person name="Kiss H."/>
            <person name="Meineke L."/>
            <person name="Brettin T."/>
            <person name="Detter J.C."/>
            <person name="Han C."/>
            <person name="Larimer F."/>
            <person name="Land M."/>
            <person name="Hauser L."/>
            <person name="Kyrpides N."/>
            <person name="Ovchinnikova G."/>
            <person name="Hazen T.C."/>
        </authorList>
    </citation>
    <scope>NUCLEOTIDE SEQUENCE [LARGE SCALE GENOMIC DNA]</scope>
    <source>
        <strain>ATCC 27774 / DSM 6949 / MB</strain>
    </source>
</reference>
<gene>
    <name evidence="1" type="primary">nuoK</name>
    <name type="ordered locus">Ddes_1658</name>
</gene>
<proteinExistence type="inferred from homology"/>
<comment type="function">
    <text evidence="1">NDH-1 shuttles electrons from NADH, via FMN and iron-sulfur (Fe-S) centers, to quinones in the respiratory chain. The immediate electron acceptor for the enzyme in this species is believed to be ubiquinone. Couples the redox reaction to proton translocation (for every two electrons transferred, four hydrogen ions are translocated across the cytoplasmic membrane), and thus conserves the redox energy in a proton gradient.</text>
</comment>
<comment type="catalytic activity">
    <reaction evidence="1">
        <text>a quinone + NADH + 5 H(+)(in) = a quinol + NAD(+) + 4 H(+)(out)</text>
        <dbReference type="Rhea" id="RHEA:57888"/>
        <dbReference type="ChEBI" id="CHEBI:15378"/>
        <dbReference type="ChEBI" id="CHEBI:24646"/>
        <dbReference type="ChEBI" id="CHEBI:57540"/>
        <dbReference type="ChEBI" id="CHEBI:57945"/>
        <dbReference type="ChEBI" id="CHEBI:132124"/>
    </reaction>
</comment>
<comment type="subunit">
    <text evidence="1">NDH-1 is composed of 14 different subunits. Subunits NuoA, H, J, K, L, M, N constitute the membrane sector of the complex.</text>
</comment>
<comment type="subcellular location">
    <subcellularLocation>
        <location evidence="1">Cell inner membrane</location>
        <topology evidence="1">Multi-pass membrane protein</topology>
    </subcellularLocation>
</comment>
<comment type="similarity">
    <text evidence="1">Belongs to the complex I subunit 4L family.</text>
</comment>
<name>NUOK_DESDA</name>
<feature type="chain" id="PRO_0000390031" description="NADH-quinone oxidoreductase subunit K">
    <location>
        <begin position="1"/>
        <end position="100"/>
    </location>
</feature>
<feature type="transmembrane region" description="Helical" evidence="1">
    <location>
        <begin position="2"/>
        <end position="22"/>
    </location>
</feature>
<feature type="transmembrane region" description="Helical" evidence="1">
    <location>
        <begin position="28"/>
        <end position="48"/>
    </location>
</feature>
<feature type="transmembrane region" description="Helical" evidence="1">
    <location>
        <begin position="64"/>
        <end position="84"/>
    </location>
</feature>
<protein>
    <recommendedName>
        <fullName evidence="1">NADH-quinone oxidoreductase subunit K</fullName>
        <ecNumber evidence="1">7.1.1.-</ecNumber>
    </recommendedName>
    <alternativeName>
        <fullName evidence="1">NADH dehydrogenase I subunit K</fullName>
    </alternativeName>
    <alternativeName>
        <fullName evidence="1">NDH-1 subunit K</fullName>
    </alternativeName>
</protein>
<organism>
    <name type="scientific">Desulfovibrio desulfuricans (strain ATCC 27774 / DSM 6949 / MB)</name>
    <dbReference type="NCBI Taxonomy" id="525146"/>
    <lineage>
        <taxon>Bacteria</taxon>
        <taxon>Pseudomonadati</taxon>
        <taxon>Thermodesulfobacteriota</taxon>
        <taxon>Desulfovibrionia</taxon>
        <taxon>Desulfovibrionales</taxon>
        <taxon>Desulfovibrionaceae</taxon>
        <taxon>Desulfovibrio</taxon>
    </lineage>
</organism>
<sequence>MIPLSWYMALATVLFCIGVAGFLTRRNIIVMLLSLELMLNGVNLNLVAMSYFMDSLRGHVFTLFVITVAACEAAVGLGIVICLFRSRRTVRNDNIVELRG</sequence>
<dbReference type="EC" id="7.1.1.-" evidence="1"/>
<dbReference type="EMBL" id="CP001358">
    <property type="protein sequence ID" value="ACL49557.1"/>
    <property type="molecule type" value="Genomic_DNA"/>
</dbReference>
<dbReference type="SMR" id="B8J1D0"/>
<dbReference type="STRING" id="525146.Ddes_1658"/>
<dbReference type="KEGG" id="dds:Ddes_1658"/>
<dbReference type="eggNOG" id="COG0713">
    <property type="taxonomic scope" value="Bacteria"/>
</dbReference>
<dbReference type="HOGENOM" id="CLU_144724_0_0_7"/>
<dbReference type="GO" id="GO:0030964">
    <property type="term" value="C:NADH dehydrogenase complex"/>
    <property type="evidence" value="ECO:0007669"/>
    <property type="project" value="TreeGrafter"/>
</dbReference>
<dbReference type="GO" id="GO:0005886">
    <property type="term" value="C:plasma membrane"/>
    <property type="evidence" value="ECO:0007669"/>
    <property type="project" value="UniProtKB-SubCell"/>
</dbReference>
<dbReference type="GO" id="GO:0050136">
    <property type="term" value="F:NADH:ubiquinone reductase (non-electrogenic) activity"/>
    <property type="evidence" value="ECO:0007669"/>
    <property type="project" value="UniProtKB-UniRule"/>
</dbReference>
<dbReference type="GO" id="GO:0048038">
    <property type="term" value="F:quinone binding"/>
    <property type="evidence" value="ECO:0007669"/>
    <property type="project" value="UniProtKB-KW"/>
</dbReference>
<dbReference type="GO" id="GO:0042773">
    <property type="term" value="P:ATP synthesis coupled electron transport"/>
    <property type="evidence" value="ECO:0007669"/>
    <property type="project" value="InterPro"/>
</dbReference>
<dbReference type="FunFam" id="1.10.287.3510:FF:000001">
    <property type="entry name" value="NADH-quinone oxidoreductase subunit K"/>
    <property type="match status" value="1"/>
</dbReference>
<dbReference type="Gene3D" id="1.10.287.3510">
    <property type="match status" value="1"/>
</dbReference>
<dbReference type="HAMAP" id="MF_01456">
    <property type="entry name" value="NDH1_NuoK"/>
    <property type="match status" value="1"/>
</dbReference>
<dbReference type="InterPro" id="IPR001133">
    <property type="entry name" value="NADH_UbQ_OxRdtase_chain4L/K"/>
</dbReference>
<dbReference type="InterPro" id="IPR039428">
    <property type="entry name" value="NUOK/Mnh_C1-like"/>
</dbReference>
<dbReference type="NCBIfam" id="NF004320">
    <property type="entry name" value="PRK05715.1-2"/>
    <property type="match status" value="1"/>
</dbReference>
<dbReference type="NCBIfam" id="NF004321">
    <property type="entry name" value="PRK05715.1-3"/>
    <property type="match status" value="1"/>
</dbReference>
<dbReference type="NCBIfam" id="NF004323">
    <property type="entry name" value="PRK05715.1-5"/>
    <property type="match status" value="1"/>
</dbReference>
<dbReference type="PANTHER" id="PTHR11434:SF16">
    <property type="entry name" value="NADH-UBIQUINONE OXIDOREDUCTASE CHAIN 4L"/>
    <property type="match status" value="1"/>
</dbReference>
<dbReference type="PANTHER" id="PTHR11434">
    <property type="entry name" value="NADH-UBIQUINONE OXIDOREDUCTASE SUBUNIT ND4L"/>
    <property type="match status" value="1"/>
</dbReference>
<dbReference type="Pfam" id="PF00420">
    <property type="entry name" value="Oxidored_q2"/>
    <property type="match status" value="1"/>
</dbReference>